<organism>
    <name type="scientific">Mus musculus</name>
    <name type="common">Mouse</name>
    <dbReference type="NCBI Taxonomy" id="10090"/>
    <lineage>
        <taxon>Eukaryota</taxon>
        <taxon>Metazoa</taxon>
        <taxon>Chordata</taxon>
        <taxon>Craniata</taxon>
        <taxon>Vertebrata</taxon>
        <taxon>Euteleostomi</taxon>
        <taxon>Mammalia</taxon>
        <taxon>Eutheria</taxon>
        <taxon>Euarchontoglires</taxon>
        <taxon>Glires</taxon>
        <taxon>Rodentia</taxon>
        <taxon>Myomorpha</taxon>
        <taxon>Muroidea</taxon>
        <taxon>Muridae</taxon>
        <taxon>Murinae</taxon>
        <taxon>Mus</taxon>
        <taxon>Mus</taxon>
    </lineage>
</organism>
<dbReference type="EMBL" id="AK006639">
    <property type="protein sequence ID" value="BAB24684.1"/>
    <property type="molecule type" value="mRNA"/>
</dbReference>
<dbReference type="EMBL" id="AK032002">
    <property type="protein sequence ID" value="BAC27644.1"/>
    <property type="molecule type" value="mRNA"/>
</dbReference>
<dbReference type="EMBL" id="AL731670">
    <property type="status" value="NOT_ANNOTATED_CDS"/>
    <property type="molecule type" value="Genomic_DNA"/>
</dbReference>
<dbReference type="EMBL" id="BC119102">
    <property type="protein sequence ID" value="AAI19103.1"/>
    <property type="molecule type" value="mRNA"/>
</dbReference>
<dbReference type="EMBL" id="BC119104">
    <property type="protein sequence ID" value="AAI19105.1"/>
    <property type="molecule type" value="mRNA"/>
</dbReference>
<dbReference type="CCDS" id="CCDS25506.1"/>
<dbReference type="RefSeq" id="NP_082768.1">
    <property type="nucleotide sequence ID" value="NM_028492.2"/>
</dbReference>
<dbReference type="SMR" id="Q9D9P2"/>
<dbReference type="BioGRID" id="215899">
    <property type="interactions" value="1"/>
</dbReference>
<dbReference type="FunCoup" id="Q9D9P2">
    <property type="interactions" value="24"/>
</dbReference>
<dbReference type="STRING" id="10090.ENSMUSP00000021307"/>
<dbReference type="GlyGen" id="Q9D9P2">
    <property type="glycosylation" value="1 site, 1 N-linked glycan (1 site)"/>
</dbReference>
<dbReference type="PhosphoSitePlus" id="Q9D9P2"/>
<dbReference type="PaxDb" id="10090-ENSMUSP00000021307"/>
<dbReference type="ProteomicsDB" id="281237"/>
<dbReference type="Antibodypedia" id="52477">
    <property type="antibodies" value="41 antibodies from 10 providers"/>
</dbReference>
<dbReference type="DNASU" id="73293"/>
<dbReference type="Ensembl" id="ENSMUST00000021307.10">
    <property type="protein sequence ID" value="ENSMUSP00000021307.4"/>
    <property type="gene ID" value="ENSMUSG00000020930.10"/>
</dbReference>
<dbReference type="GeneID" id="73293"/>
<dbReference type="KEGG" id="mmu:73293"/>
<dbReference type="UCSC" id="uc007lst.1">
    <property type="organism name" value="mouse"/>
</dbReference>
<dbReference type="AGR" id="MGI:1920543"/>
<dbReference type="CTD" id="73293"/>
<dbReference type="MGI" id="MGI:1920543">
    <property type="gene designation" value="Ccdc103"/>
</dbReference>
<dbReference type="VEuPathDB" id="HostDB:ENSMUSG00000020930"/>
<dbReference type="eggNOG" id="ENOG502RY3P">
    <property type="taxonomic scope" value="Eukaryota"/>
</dbReference>
<dbReference type="GeneTree" id="ENSGT00390000004038"/>
<dbReference type="HOGENOM" id="CLU_085512_0_0_1"/>
<dbReference type="InParanoid" id="Q9D9P2"/>
<dbReference type="OMA" id="YRNWRRH"/>
<dbReference type="OrthoDB" id="447931at2759"/>
<dbReference type="PhylomeDB" id="Q9D9P2"/>
<dbReference type="TreeFam" id="TF324467"/>
<dbReference type="BioGRID-ORCS" id="73293">
    <property type="hits" value="1 hit in 77 CRISPR screens"/>
</dbReference>
<dbReference type="PRO" id="PR:Q9D9P2"/>
<dbReference type="Proteomes" id="UP000000589">
    <property type="component" value="Chromosome 11"/>
</dbReference>
<dbReference type="RNAct" id="Q9D9P2">
    <property type="molecule type" value="protein"/>
</dbReference>
<dbReference type="Bgee" id="ENSMUSG00000020930">
    <property type="expression patterns" value="Expressed in seminiferous tubule of testis and 76 other cell types or tissues"/>
</dbReference>
<dbReference type="ExpressionAtlas" id="Q9D9P2">
    <property type="expression patterns" value="baseline and differential"/>
</dbReference>
<dbReference type="GO" id="GO:0031514">
    <property type="term" value="C:motile cilium"/>
    <property type="evidence" value="ECO:0007669"/>
    <property type="project" value="UniProtKB-SubCell"/>
</dbReference>
<dbReference type="GO" id="GO:0036157">
    <property type="term" value="C:outer dynein arm"/>
    <property type="evidence" value="ECO:0007669"/>
    <property type="project" value="InterPro"/>
</dbReference>
<dbReference type="GO" id="GO:0042803">
    <property type="term" value="F:protein homodimerization activity"/>
    <property type="evidence" value="ECO:0007669"/>
    <property type="project" value="Ensembl"/>
</dbReference>
<dbReference type="GO" id="GO:0003341">
    <property type="term" value="P:cilium movement"/>
    <property type="evidence" value="ECO:0007669"/>
    <property type="project" value="Ensembl"/>
</dbReference>
<dbReference type="GO" id="GO:0071907">
    <property type="term" value="P:determination of digestive tract left/right asymmetry"/>
    <property type="evidence" value="ECO:0007669"/>
    <property type="project" value="Ensembl"/>
</dbReference>
<dbReference type="GO" id="GO:0001947">
    <property type="term" value="P:heart looping"/>
    <property type="evidence" value="ECO:0007669"/>
    <property type="project" value="Ensembl"/>
</dbReference>
<dbReference type="GO" id="GO:0036159">
    <property type="term" value="P:inner dynein arm assembly"/>
    <property type="evidence" value="ECO:0007669"/>
    <property type="project" value="Ensembl"/>
</dbReference>
<dbReference type="GO" id="GO:0036158">
    <property type="term" value="P:outer dynein arm assembly"/>
    <property type="evidence" value="ECO:0007669"/>
    <property type="project" value="Ensembl"/>
</dbReference>
<dbReference type="InterPro" id="IPR042422">
    <property type="entry name" value="CC103"/>
</dbReference>
<dbReference type="InterPro" id="IPR031733">
    <property type="entry name" value="Dynein_attach_N"/>
</dbReference>
<dbReference type="InterPro" id="IPR025986">
    <property type="entry name" value="RPAP3-like_C"/>
</dbReference>
<dbReference type="PANTHER" id="PTHR28572">
    <property type="entry name" value="COILED-COIL DOMAIN-CONTAINING PROTEIN 103"/>
    <property type="match status" value="1"/>
</dbReference>
<dbReference type="PANTHER" id="PTHR28572:SF1">
    <property type="entry name" value="COILED-COIL DOMAIN-CONTAINING PROTEIN 103"/>
    <property type="match status" value="1"/>
</dbReference>
<dbReference type="Pfam" id="PF15867">
    <property type="entry name" value="Dynein_attach_N"/>
    <property type="match status" value="1"/>
</dbReference>
<dbReference type="Pfam" id="PF13877">
    <property type="entry name" value="RPAP3_C"/>
    <property type="match status" value="1"/>
</dbReference>
<evidence type="ECO:0000250" key="1">
    <source>
        <dbReference type="UniProtKB" id="Q6DGB6"/>
    </source>
</evidence>
<evidence type="ECO:0000250" key="2">
    <source>
        <dbReference type="UniProtKB" id="Q8IW40"/>
    </source>
</evidence>
<evidence type="ECO:0000255" key="3"/>
<evidence type="ECO:0000305" key="4"/>
<reference key="1">
    <citation type="journal article" date="2005" name="Science">
        <title>The transcriptional landscape of the mammalian genome.</title>
        <authorList>
            <person name="Carninci P."/>
            <person name="Kasukawa T."/>
            <person name="Katayama S."/>
            <person name="Gough J."/>
            <person name="Frith M.C."/>
            <person name="Maeda N."/>
            <person name="Oyama R."/>
            <person name="Ravasi T."/>
            <person name="Lenhard B."/>
            <person name="Wells C."/>
            <person name="Kodzius R."/>
            <person name="Shimokawa K."/>
            <person name="Bajic V.B."/>
            <person name="Brenner S.E."/>
            <person name="Batalov S."/>
            <person name="Forrest A.R."/>
            <person name="Zavolan M."/>
            <person name="Davis M.J."/>
            <person name="Wilming L.G."/>
            <person name="Aidinis V."/>
            <person name="Allen J.E."/>
            <person name="Ambesi-Impiombato A."/>
            <person name="Apweiler R."/>
            <person name="Aturaliya R.N."/>
            <person name="Bailey T.L."/>
            <person name="Bansal M."/>
            <person name="Baxter L."/>
            <person name="Beisel K.W."/>
            <person name="Bersano T."/>
            <person name="Bono H."/>
            <person name="Chalk A.M."/>
            <person name="Chiu K.P."/>
            <person name="Choudhary V."/>
            <person name="Christoffels A."/>
            <person name="Clutterbuck D.R."/>
            <person name="Crowe M.L."/>
            <person name="Dalla E."/>
            <person name="Dalrymple B.P."/>
            <person name="de Bono B."/>
            <person name="Della Gatta G."/>
            <person name="di Bernardo D."/>
            <person name="Down T."/>
            <person name="Engstrom P."/>
            <person name="Fagiolini M."/>
            <person name="Faulkner G."/>
            <person name="Fletcher C.F."/>
            <person name="Fukushima T."/>
            <person name="Furuno M."/>
            <person name="Futaki S."/>
            <person name="Gariboldi M."/>
            <person name="Georgii-Hemming P."/>
            <person name="Gingeras T.R."/>
            <person name="Gojobori T."/>
            <person name="Green R.E."/>
            <person name="Gustincich S."/>
            <person name="Harbers M."/>
            <person name="Hayashi Y."/>
            <person name="Hensch T.K."/>
            <person name="Hirokawa N."/>
            <person name="Hill D."/>
            <person name="Huminiecki L."/>
            <person name="Iacono M."/>
            <person name="Ikeo K."/>
            <person name="Iwama A."/>
            <person name="Ishikawa T."/>
            <person name="Jakt M."/>
            <person name="Kanapin A."/>
            <person name="Katoh M."/>
            <person name="Kawasawa Y."/>
            <person name="Kelso J."/>
            <person name="Kitamura H."/>
            <person name="Kitano H."/>
            <person name="Kollias G."/>
            <person name="Krishnan S.P."/>
            <person name="Kruger A."/>
            <person name="Kummerfeld S.K."/>
            <person name="Kurochkin I.V."/>
            <person name="Lareau L.F."/>
            <person name="Lazarevic D."/>
            <person name="Lipovich L."/>
            <person name="Liu J."/>
            <person name="Liuni S."/>
            <person name="McWilliam S."/>
            <person name="Madan Babu M."/>
            <person name="Madera M."/>
            <person name="Marchionni L."/>
            <person name="Matsuda H."/>
            <person name="Matsuzawa S."/>
            <person name="Miki H."/>
            <person name="Mignone F."/>
            <person name="Miyake S."/>
            <person name="Morris K."/>
            <person name="Mottagui-Tabar S."/>
            <person name="Mulder N."/>
            <person name="Nakano N."/>
            <person name="Nakauchi H."/>
            <person name="Ng P."/>
            <person name="Nilsson R."/>
            <person name="Nishiguchi S."/>
            <person name="Nishikawa S."/>
            <person name="Nori F."/>
            <person name="Ohara O."/>
            <person name="Okazaki Y."/>
            <person name="Orlando V."/>
            <person name="Pang K.C."/>
            <person name="Pavan W.J."/>
            <person name="Pavesi G."/>
            <person name="Pesole G."/>
            <person name="Petrovsky N."/>
            <person name="Piazza S."/>
            <person name="Reed J."/>
            <person name="Reid J.F."/>
            <person name="Ring B.Z."/>
            <person name="Ringwald M."/>
            <person name="Rost B."/>
            <person name="Ruan Y."/>
            <person name="Salzberg S.L."/>
            <person name="Sandelin A."/>
            <person name="Schneider C."/>
            <person name="Schoenbach C."/>
            <person name="Sekiguchi K."/>
            <person name="Semple C.A."/>
            <person name="Seno S."/>
            <person name="Sessa L."/>
            <person name="Sheng Y."/>
            <person name="Shibata Y."/>
            <person name="Shimada H."/>
            <person name="Shimada K."/>
            <person name="Silva D."/>
            <person name="Sinclair B."/>
            <person name="Sperling S."/>
            <person name="Stupka E."/>
            <person name="Sugiura K."/>
            <person name="Sultana R."/>
            <person name="Takenaka Y."/>
            <person name="Taki K."/>
            <person name="Tammoja K."/>
            <person name="Tan S.L."/>
            <person name="Tang S."/>
            <person name="Taylor M.S."/>
            <person name="Tegner J."/>
            <person name="Teichmann S.A."/>
            <person name="Ueda H.R."/>
            <person name="van Nimwegen E."/>
            <person name="Verardo R."/>
            <person name="Wei C.L."/>
            <person name="Yagi K."/>
            <person name="Yamanishi H."/>
            <person name="Zabarovsky E."/>
            <person name="Zhu S."/>
            <person name="Zimmer A."/>
            <person name="Hide W."/>
            <person name="Bult C."/>
            <person name="Grimmond S.M."/>
            <person name="Teasdale R.D."/>
            <person name="Liu E.T."/>
            <person name="Brusic V."/>
            <person name="Quackenbush J."/>
            <person name="Wahlestedt C."/>
            <person name="Mattick J.S."/>
            <person name="Hume D.A."/>
            <person name="Kai C."/>
            <person name="Sasaki D."/>
            <person name="Tomaru Y."/>
            <person name="Fukuda S."/>
            <person name="Kanamori-Katayama M."/>
            <person name="Suzuki M."/>
            <person name="Aoki J."/>
            <person name="Arakawa T."/>
            <person name="Iida J."/>
            <person name="Imamura K."/>
            <person name="Itoh M."/>
            <person name="Kato T."/>
            <person name="Kawaji H."/>
            <person name="Kawagashira N."/>
            <person name="Kawashima T."/>
            <person name="Kojima M."/>
            <person name="Kondo S."/>
            <person name="Konno H."/>
            <person name="Nakano K."/>
            <person name="Ninomiya N."/>
            <person name="Nishio T."/>
            <person name="Okada M."/>
            <person name="Plessy C."/>
            <person name="Shibata K."/>
            <person name="Shiraki T."/>
            <person name="Suzuki S."/>
            <person name="Tagami M."/>
            <person name="Waki K."/>
            <person name="Watahiki A."/>
            <person name="Okamura-Oho Y."/>
            <person name="Suzuki H."/>
            <person name="Kawai J."/>
            <person name="Hayashizaki Y."/>
        </authorList>
    </citation>
    <scope>NUCLEOTIDE SEQUENCE [LARGE SCALE MRNA]</scope>
    <source>
        <strain>C57BL/6J</strain>
        <tissue>Medulla oblongata</tissue>
        <tissue>Testis</tissue>
    </source>
</reference>
<reference key="2">
    <citation type="journal article" date="2009" name="PLoS Biol.">
        <title>Lineage-specific biology revealed by a finished genome assembly of the mouse.</title>
        <authorList>
            <person name="Church D.M."/>
            <person name="Goodstadt L."/>
            <person name="Hillier L.W."/>
            <person name="Zody M.C."/>
            <person name="Goldstein S."/>
            <person name="She X."/>
            <person name="Bult C.J."/>
            <person name="Agarwala R."/>
            <person name="Cherry J.L."/>
            <person name="DiCuccio M."/>
            <person name="Hlavina W."/>
            <person name="Kapustin Y."/>
            <person name="Meric P."/>
            <person name="Maglott D."/>
            <person name="Birtle Z."/>
            <person name="Marques A.C."/>
            <person name="Graves T."/>
            <person name="Zhou S."/>
            <person name="Teague B."/>
            <person name="Potamousis K."/>
            <person name="Churas C."/>
            <person name="Place M."/>
            <person name="Herschleb J."/>
            <person name="Runnheim R."/>
            <person name="Forrest D."/>
            <person name="Amos-Landgraf J."/>
            <person name="Schwartz D.C."/>
            <person name="Cheng Z."/>
            <person name="Lindblad-Toh K."/>
            <person name="Eichler E.E."/>
            <person name="Ponting C.P."/>
        </authorList>
    </citation>
    <scope>NUCLEOTIDE SEQUENCE [LARGE SCALE GENOMIC DNA]</scope>
    <source>
        <strain>C57BL/6J</strain>
    </source>
</reference>
<reference key="3">
    <citation type="journal article" date="2004" name="Genome Res.">
        <title>The status, quality, and expansion of the NIH full-length cDNA project: the Mammalian Gene Collection (MGC).</title>
        <authorList>
            <consortium name="The MGC Project Team"/>
        </authorList>
    </citation>
    <scope>NUCLEOTIDE SEQUENCE [LARGE SCALE MRNA]</scope>
    <source>
        <tissue>Brain</tissue>
    </source>
</reference>
<reference key="4">
    <citation type="journal article" date="2010" name="Cell">
        <title>A tissue-specific atlas of mouse protein phosphorylation and expression.</title>
        <authorList>
            <person name="Huttlin E.L."/>
            <person name="Jedrychowski M.P."/>
            <person name="Elias J.E."/>
            <person name="Goswami T."/>
            <person name="Rad R."/>
            <person name="Beausoleil S.A."/>
            <person name="Villen J."/>
            <person name="Haas W."/>
            <person name="Sowa M.E."/>
            <person name="Gygi S.P."/>
        </authorList>
    </citation>
    <scope>IDENTIFICATION BY MASS SPECTROMETRY [LARGE SCALE ANALYSIS]</scope>
    <source>
        <tissue>Testis</tissue>
    </source>
</reference>
<sequence length="237" mass="26861">MEKNDVINFKALEKELQAALAADEKYKRENAAKLRAVEQRVPSYEEFRGIVLASHLKPLEQKDKMGGKRFVPWNCHTTRERTSQDVVTEIPQEKSPFQPTTSAEFYRDWRRHLRSGPERYQALLQLGGPKLGHLFQMDVGFGLLGELLVALAEHARLSDRTAVLGILHSLANTGRFNLNLSLLSHAERESCQRLFQKLQAMSTTRPMQEGLTVEEPSAGLQGEEGLLQELLELYGVH</sequence>
<accession>Q9D9P2</accession>
<accession>A2AH86</accession>
<gene>
    <name type="primary">Dnaaf19</name>
    <name type="synonym">Ccdc103</name>
</gene>
<comment type="function">
    <text evidence="2">Dynein-attachment factor required for cilia motility.</text>
</comment>
<comment type="subunit">
    <text evidence="2">Homodimer.</text>
</comment>
<comment type="subcellular location">
    <subcellularLocation>
        <location evidence="1">Cytoplasm</location>
    </subcellularLocation>
    <subcellularLocation>
        <location evidence="1">Cell projection</location>
        <location evidence="1">Cilium</location>
        <location evidence="1">Flagellum</location>
    </subcellularLocation>
</comment>
<comment type="similarity">
    <text evidence="4">Belongs to the DNAAF19/PR46b family.</text>
</comment>
<feature type="chain" id="PRO_0000263637" description="Dynein axonemal assembly factor 19">
    <location>
        <begin position="1"/>
        <end position="237"/>
    </location>
</feature>
<feature type="coiled-coil region" evidence="3">
    <location>
        <begin position="8"/>
        <end position="33"/>
    </location>
</feature>
<protein>
    <recommendedName>
        <fullName>Dynein axonemal assembly factor 19</fullName>
    </recommendedName>
    <alternativeName>
        <fullName>Coiled-coil domain-containing protein 103</fullName>
    </alternativeName>
</protein>
<proteinExistence type="evidence at protein level"/>
<name>DAA19_MOUSE</name>
<keyword id="KW-0966">Cell projection</keyword>
<keyword id="KW-0969">Cilium</keyword>
<keyword id="KW-0970">Cilium biogenesis/degradation</keyword>
<keyword id="KW-0175">Coiled coil</keyword>
<keyword id="KW-0963">Cytoplasm</keyword>
<keyword id="KW-0282">Flagellum</keyword>
<keyword id="KW-1185">Reference proteome</keyword>